<name>COGB_PARCM</name>
<keyword id="KW-0177">Collagen degradation</keyword>
<keyword id="KW-0903">Direct protein sequencing</keyword>
<keyword id="KW-0378">Hydrolase</keyword>
<keyword id="KW-0645">Protease</keyword>
<keyword id="KW-0720">Serine protease</keyword>
<organism>
    <name type="scientific">Paralithodes camtschaticus</name>
    <name type="common">Red king crab</name>
    <name type="synonym">Maja camtschatica</name>
    <dbReference type="NCBI Taxonomy" id="6741"/>
    <lineage>
        <taxon>Eukaryota</taxon>
        <taxon>Metazoa</taxon>
        <taxon>Ecdysozoa</taxon>
        <taxon>Arthropoda</taxon>
        <taxon>Crustacea</taxon>
        <taxon>Multicrustacea</taxon>
        <taxon>Malacostraca</taxon>
        <taxon>Eumalacostraca</taxon>
        <taxon>Eucarida</taxon>
        <taxon>Decapoda</taxon>
        <taxon>Pleocyemata</taxon>
        <taxon>Anomura</taxon>
        <taxon>Paguroidea</taxon>
        <taxon>Lithodidae</taxon>
        <taxon>Paralithodes</taxon>
    </lineage>
</organism>
<sequence>IVGGTEVTPGEIPYQLSFQD</sequence>
<proteinExistence type="evidence at protein level"/>
<dbReference type="EC" id="3.4.21.32"/>
<dbReference type="PIR" id="C34817">
    <property type="entry name" value="C34817"/>
</dbReference>
<dbReference type="MEROPS" id="S01.035"/>
<dbReference type="GO" id="GO:0008236">
    <property type="term" value="F:serine-type peptidase activity"/>
    <property type="evidence" value="ECO:0007669"/>
    <property type="project" value="UniProtKB-KW"/>
</dbReference>
<dbReference type="GO" id="GO:0030574">
    <property type="term" value="P:collagen catabolic process"/>
    <property type="evidence" value="ECO:0007669"/>
    <property type="project" value="UniProtKB-KW"/>
</dbReference>
<dbReference type="GO" id="GO:0006508">
    <property type="term" value="P:proteolysis"/>
    <property type="evidence" value="ECO:0007669"/>
    <property type="project" value="UniProtKB-KW"/>
</dbReference>
<feature type="chain" id="PRO_0000088668" description="Collagenolytic protease 36 kDa B">
    <location>
        <begin position="1"/>
        <end position="20" status="greater than"/>
    </location>
</feature>
<feature type="domain" description="Peptidase S1" evidence="1">
    <location>
        <begin position="1"/>
        <end position="20" status="greater than"/>
    </location>
</feature>
<feature type="region of interest" description="Disordered" evidence="2">
    <location>
        <begin position="1"/>
        <end position="20"/>
    </location>
</feature>
<feature type="non-terminal residue">
    <location>
        <position position="20"/>
    </location>
</feature>
<protein>
    <recommendedName>
        <fullName>Collagenolytic protease 36 kDa B</fullName>
        <ecNumber>3.4.21.32</ecNumber>
    </recommendedName>
</protein>
<accession>P20733</accession>
<evidence type="ECO:0000255" key="1">
    <source>
        <dbReference type="PROSITE-ProRule" id="PRU00274"/>
    </source>
</evidence>
<evidence type="ECO:0000256" key="2">
    <source>
        <dbReference type="SAM" id="MobiDB-lite"/>
    </source>
</evidence>
<comment type="function">
    <text>This enzyme is a serine protease capable of degrading the native triple helix of collagen.</text>
</comment>
<comment type="catalytic activity">
    <reaction>
        <text>Hydrolysis of proteins, with broad specificity for peptide bonds. Native collagen is cleaved about 75% of the length of the molecule from the N-terminus. Low activity on small molecule substrates of both trypsin and chymotrypsin.</text>
        <dbReference type="EC" id="3.4.21.32"/>
    </reaction>
</comment>
<comment type="similarity">
    <text evidence="1">Belongs to the peptidase S1 family.</text>
</comment>
<reference key="1">
    <citation type="journal article" date="1990" name="Biochem. Biophys. Res. Commun.">
        <title>The isolation and properties of collagenolytic proteases from crab hepatopancreas.</title>
        <authorList>
            <person name="Klimova O.A."/>
            <person name="Borukhov S.I."/>
            <person name="Solovyeva N.I."/>
            <person name="Balaevskaya T.O."/>
            <person name="Strongin A.Y."/>
        </authorList>
    </citation>
    <scope>PROTEIN SEQUENCE</scope>
    <source>
        <tissue>Hepatopancreas</tissue>
    </source>
</reference>